<accession>B2U315</accession>
<evidence type="ECO:0000255" key="1">
    <source>
        <dbReference type="HAMAP-Rule" id="MF_00040"/>
    </source>
</evidence>
<sequence length="185" mass="20639">MISDIRKDAEVRMDKCVEAFKTQISKIRTGRASPSLLDGIVVEYYGTPTPLRQLASVTVEDSRTLKINVFDRSMSPAVEKAIMASDLGLNPNSAGSDIRVPLPPLTEERRKDLTKIVRGEAEQARVAVRNVRRDANDKVKALLKDKEISEDDDRRSQDDVQKLTDAAIKKIEAALADKEAELMQF</sequence>
<reference key="1">
    <citation type="submission" date="2008-05" db="EMBL/GenBank/DDBJ databases">
        <title>Complete sequence of Shigella boydii serotype 18 strain BS512.</title>
        <authorList>
            <person name="Rasko D.A."/>
            <person name="Rosovitz M."/>
            <person name="Maurelli A.T."/>
            <person name="Myers G."/>
            <person name="Seshadri R."/>
            <person name="Cer R."/>
            <person name="Jiang L."/>
            <person name="Ravel J."/>
            <person name="Sebastian Y."/>
        </authorList>
    </citation>
    <scope>NUCLEOTIDE SEQUENCE [LARGE SCALE GENOMIC DNA]</scope>
    <source>
        <strain>CDC 3083-94 / BS512</strain>
    </source>
</reference>
<dbReference type="EMBL" id="CP001063">
    <property type="protein sequence ID" value="ACD08182.1"/>
    <property type="molecule type" value="Genomic_DNA"/>
</dbReference>
<dbReference type="RefSeq" id="WP_000622418.1">
    <property type="nucleotide sequence ID" value="NC_010658.1"/>
</dbReference>
<dbReference type="SMR" id="B2U315"/>
<dbReference type="STRING" id="344609.SbBS512_E0165"/>
<dbReference type="GeneID" id="93777253"/>
<dbReference type="KEGG" id="sbc:SbBS512_E0165"/>
<dbReference type="HOGENOM" id="CLU_073981_2_1_6"/>
<dbReference type="Proteomes" id="UP000001030">
    <property type="component" value="Chromosome"/>
</dbReference>
<dbReference type="GO" id="GO:0005829">
    <property type="term" value="C:cytosol"/>
    <property type="evidence" value="ECO:0007669"/>
    <property type="project" value="GOC"/>
</dbReference>
<dbReference type="GO" id="GO:0043023">
    <property type="term" value="F:ribosomal large subunit binding"/>
    <property type="evidence" value="ECO:0007669"/>
    <property type="project" value="TreeGrafter"/>
</dbReference>
<dbReference type="GO" id="GO:0002184">
    <property type="term" value="P:cytoplasmic translational termination"/>
    <property type="evidence" value="ECO:0007669"/>
    <property type="project" value="TreeGrafter"/>
</dbReference>
<dbReference type="CDD" id="cd00520">
    <property type="entry name" value="RRF"/>
    <property type="match status" value="1"/>
</dbReference>
<dbReference type="FunFam" id="1.10.132.20:FF:000001">
    <property type="entry name" value="Ribosome-recycling factor"/>
    <property type="match status" value="1"/>
</dbReference>
<dbReference type="FunFam" id="3.30.1360.40:FF:000001">
    <property type="entry name" value="Ribosome-recycling factor"/>
    <property type="match status" value="1"/>
</dbReference>
<dbReference type="Gene3D" id="3.30.1360.40">
    <property type="match status" value="1"/>
</dbReference>
<dbReference type="Gene3D" id="1.10.132.20">
    <property type="entry name" value="Ribosome-recycling factor"/>
    <property type="match status" value="1"/>
</dbReference>
<dbReference type="HAMAP" id="MF_00040">
    <property type="entry name" value="RRF"/>
    <property type="match status" value="1"/>
</dbReference>
<dbReference type="InterPro" id="IPR002661">
    <property type="entry name" value="Ribosome_recyc_fac"/>
</dbReference>
<dbReference type="InterPro" id="IPR023584">
    <property type="entry name" value="Ribosome_recyc_fac_dom"/>
</dbReference>
<dbReference type="InterPro" id="IPR036191">
    <property type="entry name" value="RRF_sf"/>
</dbReference>
<dbReference type="NCBIfam" id="TIGR00496">
    <property type="entry name" value="frr"/>
    <property type="match status" value="1"/>
</dbReference>
<dbReference type="PANTHER" id="PTHR20982:SF3">
    <property type="entry name" value="MITOCHONDRIAL RIBOSOME RECYCLING FACTOR PSEUDO 1"/>
    <property type="match status" value="1"/>
</dbReference>
<dbReference type="PANTHER" id="PTHR20982">
    <property type="entry name" value="RIBOSOME RECYCLING FACTOR"/>
    <property type="match status" value="1"/>
</dbReference>
<dbReference type="Pfam" id="PF01765">
    <property type="entry name" value="RRF"/>
    <property type="match status" value="1"/>
</dbReference>
<dbReference type="SUPFAM" id="SSF55194">
    <property type="entry name" value="Ribosome recycling factor, RRF"/>
    <property type="match status" value="1"/>
</dbReference>
<comment type="function">
    <text evidence="1">Responsible for the release of ribosomes from messenger RNA at the termination of protein biosynthesis. May increase the efficiency of translation by recycling ribosomes from one round of translation to another.</text>
</comment>
<comment type="subcellular location">
    <subcellularLocation>
        <location evidence="1">Cytoplasm</location>
    </subcellularLocation>
</comment>
<comment type="similarity">
    <text evidence="1">Belongs to the RRF family.</text>
</comment>
<organism>
    <name type="scientific">Shigella boydii serotype 18 (strain CDC 3083-94 / BS512)</name>
    <dbReference type="NCBI Taxonomy" id="344609"/>
    <lineage>
        <taxon>Bacteria</taxon>
        <taxon>Pseudomonadati</taxon>
        <taxon>Pseudomonadota</taxon>
        <taxon>Gammaproteobacteria</taxon>
        <taxon>Enterobacterales</taxon>
        <taxon>Enterobacteriaceae</taxon>
        <taxon>Shigella</taxon>
    </lineage>
</organism>
<feature type="chain" id="PRO_1000090787" description="Ribosome-recycling factor">
    <location>
        <begin position="1"/>
        <end position="185"/>
    </location>
</feature>
<feature type="modified residue" description="N6-acetyllysine" evidence="1">
    <location>
        <position position="162"/>
    </location>
</feature>
<name>RRF_SHIB3</name>
<keyword id="KW-0007">Acetylation</keyword>
<keyword id="KW-0963">Cytoplasm</keyword>
<keyword id="KW-0648">Protein biosynthesis</keyword>
<keyword id="KW-1185">Reference proteome</keyword>
<proteinExistence type="inferred from homology"/>
<protein>
    <recommendedName>
        <fullName evidence="1">Ribosome-recycling factor</fullName>
        <shortName evidence="1">RRF</shortName>
    </recommendedName>
    <alternativeName>
        <fullName evidence="1">Ribosome-releasing factor</fullName>
    </alternativeName>
</protein>
<gene>
    <name evidence="1" type="primary">frr</name>
    <name type="ordered locus">SbBS512_E0165</name>
</gene>